<protein>
    <recommendedName>
        <fullName>Serine/threonine-protein kinase Nek4</fullName>
        <ecNumber evidence="6">2.7.11.1</ecNumber>
    </recommendedName>
    <alternativeName>
        <fullName>Never in mitosis A-related kinase 4</fullName>
        <shortName>NimA-related protein kinase 4</shortName>
    </alternativeName>
    <alternativeName>
        <fullName evidence="7">Serine/threonine-protein kinase 2</fullName>
    </alternativeName>
</protein>
<comment type="function">
    <text evidence="2 6">Required for normal entry into proliferative arrest after a limited number of cell divisions, also called replicative senescence. Required for normal cell cycle arrest in response to double-stranded DNA damage (By similarity). Protein kinase that seems to act exclusively upon threonine residues.</text>
</comment>
<comment type="catalytic activity">
    <reaction evidence="6">
        <text>L-seryl-[protein] + ATP = O-phospho-L-seryl-[protein] + ADP + H(+)</text>
        <dbReference type="Rhea" id="RHEA:17989"/>
        <dbReference type="Rhea" id="RHEA-COMP:9863"/>
        <dbReference type="Rhea" id="RHEA-COMP:11604"/>
        <dbReference type="ChEBI" id="CHEBI:15378"/>
        <dbReference type="ChEBI" id="CHEBI:29999"/>
        <dbReference type="ChEBI" id="CHEBI:30616"/>
        <dbReference type="ChEBI" id="CHEBI:83421"/>
        <dbReference type="ChEBI" id="CHEBI:456216"/>
        <dbReference type="EC" id="2.7.11.1"/>
    </reaction>
</comment>
<comment type="catalytic activity">
    <reaction evidence="6">
        <text>L-threonyl-[protein] + ATP = O-phospho-L-threonyl-[protein] + ADP + H(+)</text>
        <dbReference type="Rhea" id="RHEA:46608"/>
        <dbReference type="Rhea" id="RHEA-COMP:11060"/>
        <dbReference type="Rhea" id="RHEA-COMP:11605"/>
        <dbReference type="ChEBI" id="CHEBI:15378"/>
        <dbReference type="ChEBI" id="CHEBI:30013"/>
        <dbReference type="ChEBI" id="CHEBI:30616"/>
        <dbReference type="ChEBI" id="CHEBI:61977"/>
        <dbReference type="ChEBI" id="CHEBI:456216"/>
        <dbReference type="EC" id="2.7.11.1"/>
    </reaction>
</comment>
<comment type="cofactor">
    <cofactor evidence="6">
        <name>Mn(2+)</name>
        <dbReference type="ChEBI" id="CHEBI:29035"/>
    </cofactor>
</comment>
<comment type="subcellular location">
    <subcellularLocation>
        <location evidence="6">Cytoplasm</location>
    </subcellularLocation>
    <subcellularLocation>
        <location evidence="2">Cell projection</location>
        <location evidence="2">Cilium</location>
    </subcellularLocation>
</comment>
<comment type="alternative products">
    <event type="alternative splicing"/>
    <isoform>
        <id>Q9Z1J2-1</id>
        <name>1</name>
        <name>mSTK2L</name>
        <sequence type="displayed"/>
    </isoform>
    <isoform>
        <id>Q9Z1J2-2</id>
        <name>2</name>
        <name>mSTK2S</name>
        <sequence type="described" ref="VSP_007001"/>
    </isoform>
</comment>
<comment type="tissue specificity">
    <text evidence="6">Expressed ubiquitously among various organs and is up-regulated in the testis.</text>
</comment>
<comment type="similarity">
    <text evidence="8">Belongs to the protein kinase superfamily. NEK Ser/Thr protein kinase family. NIMA subfamily.</text>
</comment>
<dbReference type="EC" id="2.7.11.1" evidence="6"/>
<dbReference type="EMBL" id="AJ223071">
    <property type="protein sequence ID" value="CAA11072.1"/>
    <property type="molecule type" value="mRNA"/>
</dbReference>
<dbReference type="EMBL" id="Y09234">
    <property type="protein sequence ID" value="CAA70436.1"/>
    <property type="molecule type" value="mRNA"/>
</dbReference>
<dbReference type="EMBL" id="AF099067">
    <property type="protein sequence ID" value="AAD16287.1"/>
    <property type="molecule type" value="mRNA"/>
</dbReference>
<dbReference type="CCDS" id="CCDS26902.1">
    <molecule id="Q9Z1J2-1"/>
</dbReference>
<dbReference type="CCDS" id="CCDS88612.1">
    <molecule id="Q9Z1J2-2"/>
</dbReference>
<dbReference type="PIR" id="JC7122">
    <property type="entry name" value="JC7122"/>
</dbReference>
<dbReference type="RefSeq" id="NP_001295257.1">
    <molecule id="Q9Z1J2-2"/>
    <property type="nucleotide sequence ID" value="NM_001308328.1"/>
</dbReference>
<dbReference type="RefSeq" id="NP_035979.1">
    <property type="nucleotide sequence ID" value="NM_011849.3"/>
</dbReference>
<dbReference type="SMR" id="Q9Z1J2"/>
<dbReference type="BioGRID" id="204816">
    <property type="interactions" value="3"/>
</dbReference>
<dbReference type="FunCoup" id="Q9Z1J2">
    <property type="interactions" value="2042"/>
</dbReference>
<dbReference type="STRING" id="10090.ENSMUSP00000154090"/>
<dbReference type="GlyGen" id="Q9Z1J2">
    <property type="glycosylation" value="5 sites, 2 N-linked glycans (2 sites), 1 O-linked glycan (3 sites)"/>
</dbReference>
<dbReference type="iPTMnet" id="Q9Z1J2"/>
<dbReference type="PhosphoSitePlus" id="Q9Z1J2"/>
<dbReference type="PaxDb" id="10090-ENSMUSP00000057915"/>
<dbReference type="ProteomicsDB" id="287362">
    <molecule id="Q9Z1J2-1"/>
</dbReference>
<dbReference type="ProteomicsDB" id="287363">
    <molecule id="Q9Z1J2-2"/>
</dbReference>
<dbReference type="Pumba" id="Q9Z1J2"/>
<dbReference type="Antibodypedia" id="14725">
    <property type="antibodies" value="212 antibodies from 29 providers"/>
</dbReference>
<dbReference type="DNASU" id="23955"/>
<dbReference type="Ensembl" id="ENSMUST00000226551.2">
    <molecule id="Q9Z1J2-2"/>
    <property type="protein sequence ID" value="ENSMUSP00000154678.2"/>
    <property type="gene ID" value="ENSMUSG00000021918.11"/>
</dbReference>
<dbReference type="GeneID" id="23955"/>
<dbReference type="KEGG" id="mmu:23955"/>
<dbReference type="AGR" id="MGI:1344404"/>
<dbReference type="CTD" id="6787"/>
<dbReference type="MGI" id="MGI:1344404">
    <property type="gene designation" value="Nek4"/>
</dbReference>
<dbReference type="VEuPathDB" id="HostDB:ENSMUSG00000021918"/>
<dbReference type="eggNOG" id="KOG0589">
    <property type="taxonomic scope" value="Eukaryota"/>
</dbReference>
<dbReference type="GeneTree" id="ENSGT00940000157448"/>
<dbReference type="InParanoid" id="Q9Z1J2"/>
<dbReference type="OrthoDB" id="248923at2759"/>
<dbReference type="PhylomeDB" id="Q9Z1J2"/>
<dbReference type="BioGRID-ORCS" id="23955">
    <property type="hits" value="2 hits in 79 CRISPR screens"/>
</dbReference>
<dbReference type="ChiTaRS" id="Slk">
    <property type="organism name" value="mouse"/>
</dbReference>
<dbReference type="PRO" id="PR:Q9Z1J2"/>
<dbReference type="Proteomes" id="UP000000589">
    <property type="component" value="Chromosome 14"/>
</dbReference>
<dbReference type="RNAct" id="Q9Z1J2">
    <property type="molecule type" value="protein"/>
</dbReference>
<dbReference type="Bgee" id="ENSMUSG00000021918">
    <property type="expression patterns" value="Expressed in spermatocyte and 234 other cell types or tissues"/>
</dbReference>
<dbReference type="ExpressionAtlas" id="Q9Z1J2">
    <property type="expression patterns" value="baseline and differential"/>
</dbReference>
<dbReference type="GO" id="GO:0005929">
    <property type="term" value="C:cilium"/>
    <property type="evidence" value="ECO:0007669"/>
    <property type="project" value="UniProtKB-SubCell"/>
</dbReference>
<dbReference type="GO" id="GO:0005737">
    <property type="term" value="C:cytoplasm"/>
    <property type="evidence" value="ECO:0000314"/>
    <property type="project" value="UniProtKB"/>
</dbReference>
<dbReference type="GO" id="GO:0005524">
    <property type="term" value="F:ATP binding"/>
    <property type="evidence" value="ECO:0007669"/>
    <property type="project" value="UniProtKB-KW"/>
</dbReference>
<dbReference type="GO" id="GO:0030145">
    <property type="term" value="F:manganese ion binding"/>
    <property type="evidence" value="ECO:0000314"/>
    <property type="project" value="UniProtKB"/>
</dbReference>
<dbReference type="GO" id="GO:0106310">
    <property type="term" value="F:protein serine kinase activity"/>
    <property type="evidence" value="ECO:0007669"/>
    <property type="project" value="RHEA"/>
</dbReference>
<dbReference type="GO" id="GO:0004674">
    <property type="term" value="F:protein serine/threonine kinase activity"/>
    <property type="evidence" value="ECO:0000314"/>
    <property type="project" value="UniProtKB"/>
</dbReference>
<dbReference type="GO" id="GO:0051301">
    <property type="term" value="P:cell division"/>
    <property type="evidence" value="ECO:0007669"/>
    <property type="project" value="UniProtKB-KW"/>
</dbReference>
<dbReference type="GO" id="GO:0006974">
    <property type="term" value="P:DNA damage response"/>
    <property type="evidence" value="ECO:0000250"/>
    <property type="project" value="UniProtKB"/>
</dbReference>
<dbReference type="GO" id="GO:0000278">
    <property type="term" value="P:mitotic cell cycle"/>
    <property type="evidence" value="ECO:0000250"/>
    <property type="project" value="UniProtKB"/>
</dbReference>
<dbReference type="GO" id="GO:0006468">
    <property type="term" value="P:protein phosphorylation"/>
    <property type="evidence" value="ECO:0000314"/>
    <property type="project" value="UniProtKB"/>
</dbReference>
<dbReference type="GO" id="GO:2000772">
    <property type="term" value="P:regulation of cellular senescence"/>
    <property type="evidence" value="ECO:0000250"/>
    <property type="project" value="UniProtKB"/>
</dbReference>
<dbReference type="CDD" id="cd08223">
    <property type="entry name" value="STKc_Nek4"/>
    <property type="match status" value="1"/>
</dbReference>
<dbReference type="FunFam" id="1.10.510.10:FF:000219">
    <property type="entry name" value="Putative serine/threonine-protein kinase Nek4"/>
    <property type="match status" value="1"/>
</dbReference>
<dbReference type="FunFam" id="3.30.200.20:FF:000247">
    <property type="entry name" value="serine/threonine-protein kinase Nek4 isoform X1"/>
    <property type="match status" value="1"/>
</dbReference>
<dbReference type="Gene3D" id="3.30.200.20">
    <property type="entry name" value="Phosphorylase Kinase, domain 1"/>
    <property type="match status" value="1"/>
</dbReference>
<dbReference type="Gene3D" id="1.10.510.10">
    <property type="entry name" value="Transferase(Phosphotransferase) domain 1"/>
    <property type="match status" value="1"/>
</dbReference>
<dbReference type="InterPro" id="IPR011009">
    <property type="entry name" value="Kinase-like_dom_sf"/>
</dbReference>
<dbReference type="InterPro" id="IPR051131">
    <property type="entry name" value="NEK_Ser/Thr_kinase_NIMA"/>
</dbReference>
<dbReference type="InterPro" id="IPR000719">
    <property type="entry name" value="Prot_kinase_dom"/>
</dbReference>
<dbReference type="InterPro" id="IPR017441">
    <property type="entry name" value="Protein_kinase_ATP_BS"/>
</dbReference>
<dbReference type="InterPro" id="IPR008271">
    <property type="entry name" value="Ser/Thr_kinase_AS"/>
</dbReference>
<dbReference type="PANTHER" id="PTHR44899">
    <property type="entry name" value="CAMK FAMILY PROTEIN KINASE"/>
    <property type="match status" value="1"/>
</dbReference>
<dbReference type="PANTHER" id="PTHR44899:SF7">
    <property type="entry name" value="NIMA-RELATED KINASE"/>
    <property type="match status" value="1"/>
</dbReference>
<dbReference type="Pfam" id="PF00069">
    <property type="entry name" value="Pkinase"/>
    <property type="match status" value="1"/>
</dbReference>
<dbReference type="SMART" id="SM00220">
    <property type="entry name" value="S_TKc"/>
    <property type="match status" value="1"/>
</dbReference>
<dbReference type="SUPFAM" id="SSF56112">
    <property type="entry name" value="Protein kinase-like (PK-like)"/>
    <property type="match status" value="1"/>
</dbReference>
<dbReference type="PROSITE" id="PS00107">
    <property type="entry name" value="PROTEIN_KINASE_ATP"/>
    <property type="match status" value="1"/>
</dbReference>
<dbReference type="PROSITE" id="PS50011">
    <property type="entry name" value="PROTEIN_KINASE_DOM"/>
    <property type="match status" value="1"/>
</dbReference>
<dbReference type="PROSITE" id="PS00108">
    <property type="entry name" value="PROTEIN_KINASE_ST"/>
    <property type="match status" value="1"/>
</dbReference>
<sequence>MPQAAYCYMRVVGRGSYGEVTLVKHRRDGKQYVIKKLNLRNASSRERRAAEQEAQLLSQLKHPNIVTYKESWEGGDGLLYIVMGFCEGGDLYRKLKEQKGQLLPESQVVEWFVQIAMALQYLHEKHILHRDLKTQNVFLTRTNIIKVGDLGIARVLENHGDMASTLIGTPYYMSPELFSNKPYNYKSDVWALGCCVYEMATLKHAFNAKDMNSLVYRIIEGKLPPMPKVYSTELAELIRTMLSRRPEERPSVRSILRQPYIKHHISLFLEATKAKTSKNNVKNCDSRAKPVAAVVSRKEESNTDVIHYQPRSSEGSALHVMGEDKCLSQEKPVDIGPLRSPASLEGHTGKQDMNNTGESCATISRINIDILPAERRDSANAGVVQESQPQHVDAADEVDSQCSISQEKERLQGNTKSSDQPGNLLPRRSSDGGDGEGSELVKPLYPSNKDQKPDQDQVTGIIENQDSIHPRSQPHSSMSEPSLSRQRRQKKREQTAHSGTKSQFQELPPRLLPSYPGIGKVDIIATQQNDGNQGGPVAGCVNSSRTSSTASAKDRPLSARERRRLKQSQEEMLPSGPAVQRTPSAVEPLKPQEEDQPIPAQRFSSDCSITQMNHTLPREKEKRLMHGLSEDELSSSTSSTDKSDGDSREGKSHTNEMKDLVQLMTQTLRLEAKESCEDLQVLNPGSEFRLHRKYRDTLVLHGKVAEEVEPHCTELPTGIIPGSEKIRRIVEVLRADVIQGLGIQLLEQVFDLLGEEDELEREARLQEHMGDKYTTYCVKARQLKFFEENVSF</sequence>
<gene>
    <name type="primary">Nek4</name>
    <name type="synonym">Stk2</name>
</gene>
<keyword id="KW-0025">Alternative splicing</keyword>
<keyword id="KW-0067">ATP-binding</keyword>
<keyword id="KW-0131">Cell cycle</keyword>
<keyword id="KW-0132">Cell division</keyword>
<keyword id="KW-0966">Cell projection</keyword>
<keyword id="KW-0963">Cytoplasm</keyword>
<keyword id="KW-0418">Kinase</keyword>
<keyword id="KW-0460">Magnesium</keyword>
<keyword id="KW-0479">Metal-binding</keyword>
<keyword id="KW-0488">Methylation</keyword>
<keyword id="KW-0498">Mitosis</keyword>
<keyword id="KW-0547">Nucleotide-binding</keyword>
<keyword id="KW-0597">Phosphoprotein</keyword>
<keyword id="KW-1185">Reference proteome</keyword>
<keyword id="KW-0723">Serine/threonine-protein kinase</keyword>
<keyword id="KW-0808">Transferase</keyword>
<organism>
    <name type="scientific">Mus musculus</name>
    <name type="common">Mouse</name>
    <dbReference type="NCBI Taxonomy" id="10090"/>
    <lineage>
        <taxon>Eukaryota</taxon>
        <taxon>Metazoa</taxon>
        <taxon>Chordata</taxon>
        <taxon>Craniata</taxon>
        <taxon>Vertebrata</taxon>
        <taxon>Euteleostomi</taxon>
        <taxon>Mammalia</taxon>
        <taxon>Eutheria</taxon>
        <taxon>Euarchontoglires</taxon>
        <taxon>Glires</taxon>
        <taxon>Rodentia</taxon>
        <taxon>Myomorpha</taxon>
        <taxon>Muroidea</taxon>
        <taxon>Muridae</taxon>
        <taxon>Murinae</taxon>
        <taxon>Mus</taxon>
        <taxon>Mus</taxon>
    </lineage>
</organism>
<reference key="1">
    <citation type="journal article" date="1999" name="Biochem. Biophys. Res. Commun.">
        <title>Activity and substrate specificity of the murine STK2 serine/threonine kinase that is structurally related to the mitotic regulator protein NIMA of Aspergillus nidulans.</title>
        <authorList>
            <person name="Hayashi K."/>
            <person name="Igarashi H."/>
            <person name="Ogawa M."/>
            <person name="Sakaguchi N."/>
        </authorList>
    </citation>
    <scope>NUCLEOTIDE SEQUENCE [MRNA] (ISOFORMS 1 AND 2)</scope>
    <scope>FUNCTION</scope>
    <scope>CATALYTIC ACTIVITY</scope>
    <scope>COFACTOR</scope>
    <scope>TISSUE SPECIFICITY</scope>
    <scope>SUBCELLULAR LOCATION</scope>
    <source>
        <strain>BALB/cJ</strain>
        <tissue>Spleen</tissue>
    </source>
</reference>
<reference key="2">
    <citation type="journal article" date="1999" name="Gene">
        <title>NIMA-related kinases: isolation and characterization of murine nek3 and nek4 cDNAs, and chromosomal localization of nek1, nek2 and nek3.</title>
        <authorList>
            <person name="Chen A."/>
            <person name="Yanai A."/>
            <person name="Arama E."/>
            <person name="Kilfin G."/>
            <person name="Motro B."/>
        </authorList>
    </citation>
    <scope>NUCLEOTIDE SEQUENCE [MRNA] (ISOFORM 1)</scope>
</reference>
<reference key="3">
    <citation type="journal article" date="2010" name="Cell">
        <title>A tissue-specific atlas of mouse protein phosphorylation and expression.</title>
        <authorList>
            <person name="Huttlin E.L."/>
            <person name="Jedrychowski M.P."/>
            <person name="Elias J.E."/>
            <person name="Goswami T."/>
            <person name="Rad R."/>
            <person name="Beausoleil S.A."/>
            <person name="Villen J."/>
            <person name="Haas W."/>
            <person name="Sowa M.E."/>
            <person name="Gygi S.P."/>
        </authorList>
    </citation>
    <scope>PHOSPHORYLATION [LARGE SCALE ANALYSIS] AT SER-675</scope>
    <scope>IDENTIFICATION BY MASS SPECTROMETRY [LARGE SCALE ANALYSIS]</scope>
    <source>
        <tissue>Kidney</tissue>
        <tissue>Lung</tissue>
        <tissue>Spleen</tissue>
    </source>
</reference>
<feature type="chain" id="PRO_0000086426" description="Serine/threonine-protein kinase Nek4">
    <location>
        <begin position="1"/>
        <end position="792"/>
    </location>
</feature>
<feature type="domain" description="Protein kinase" evidence="3">
    <location>
        <begin position="6"/>
        <end position="261"/>
    </location>
</feature>
<feature type="region of interest" description="Disordered" evidence="5">
    <location>
        <begin position="329"/>
        <end position="358"/>
    </location>
</feature>
<feature type="region of interest" description="Disordered" evidence="5">
    <location>
        <begin position="379"/>
        <end position="515"/>
    </location>
</feature>
<feature type="region of interest" description="Disordered" evidence="5">
    <location>
        <begin position="527"/>
        <end position="611"/>
    </location>
</feature>
<feature type="region of interest" description="Disordered" evidence="5">
    <location>
        <begin position="628"/>
        <end position="657"/>
    </location>
</feature>
<feature type="compositionally biased region" description="Polar residues" evidence="5">
    <location>
        <begin position="412"/>
        <end position="421"/>
    </location>
</feature>
<feature type="compositionally biased region" description="Polar residues" evidence="5">
    <location>
        <begin position="456"/>
        <end position="467"/>
    </location>
</feature>
<feature type="compositionally biased region" description="Polar residues" evidence="5">
    <location>
        <begin position="473"/>
        <end position="484"/>
    </location>
</feature>
<feature type="compositionally biased region" description="Polar residues" evidence="5">
    <location>
        <begin position="496"/>
        <end position="505"/>
    </location>
</feature>
<feature type="compositionally biased region" description="Polar residues" evidence="5">
    <location>
        <begin position="541"/>
        <end position="551"/>
    </location>
</feature>
<feature type="compositionally biased region" description="Polar residues" evidence="5">
    <location>
        <begin position="602"/>
        <end position="611"/>
    </location>
</feature>
<feature type="compositionally biased region" description="Basic and acidic residues" evidence="5">
    <location>
        <begin position="641"/>
        <end position="657"/>
    </location>
</feature>
<feature type="active site" description="Proton acceptor" evidence="3 4">
    <location>
        <position position="131"/>
    </location>
</feature>
<feature type="binding site" evidence="3">
    <location>
        <begin position="12"/>
        <end position="20"/>
    </location>
    <ligand>
        <name>ATP</name>
        <dbReference type="ChEBI" id="CHEBI:30616"/>
    </ligand>
</feature>
<feature type="binding site" evidence="3">
    <location>
        <position position="35"/>
    </location>
    <ligand>
        <name>ATP</name>
        <dbReference type="ChEBI" id="CHEBI:30616"/>
    </ligand>
</feature>
<feature type="modified residue" description="Phosphothreonine; by autocatalysis" evidence="1">
    <location>
        <position position="165"/>
    </location>
</feature>
<feature type="modified residue" description="Phosphoserine" evidence="2">
    <location>
        <position position="340"/>
    </location>
</feature>
<feature type="modified residue" description="Phosphoserine" evidence="2">
    <location>
        <position position="343"/>
    </location>
</feature>
<feature type="modified residue" description="N6-methyllysine" evidence="2">
    <location>
        <position position="566"/>
    </location>
</feature>
<feature type="modified residue" description="Phosphoserine" evidence="9">
    <location>
        <position position="675"/>
    </location>
</feature>
<feature type="splice variant" id="VSP_007001" description="In isoform 2." evidence="7">
    <location>
        <begin position="456"/>
        <end position="503"/>
    </location>
</feature>
<feature type="sequence conflict" description="In Ref. 2; AAD16287." evidence="8" ref="2">
    <original>G</original>
    <variation>R</variation>
    <location>
        <position position="499"/>
    </location>
</feature>
<proteinExistence type="evidence at protein level"/>
<evidence type="ECO:0000250" key="1"/>
<evidence type="ECO:0000250" key="2">
    <source>
        <dbReference type="UniProtKB" id="P51957"/>
    </source>
</evidence>
<evidence type="ECO:0000255" key="3">
    <source>
        <dbReference type="PROSITE-ProRule" id="PRU00159"/>
    </source>
</evidence>
<evidence type="ECO:0000255" key="4">
    <source>
        <dbReference type="PROSITE-ProRule" id="PRU10027"/>
    </source>
</evidence>
<evidence type="ECO:0000256" key="5">
    <source>
        <dbReference type="SAM" id="MobiDB-lite"/>
    </source>
</evidence>
<evidence type="ECO:0000269" key="6">
    <source>
    </source>
</evidence>
<evidence type="ECO:0000303" key="7">
    <source>
    </source>
</evidence>
<evidence type="ECO:0000305" key="8"/>
<evidence type="ECO:0007744" key="9">
    <source>
    </source>
</evidence>
<accession>Q9Z1J2</accession>
<accession>O35673</accession>
<accession>Q9R1J1</accession>
<name>NEK4_MOUSE</name>